<comment type="function">
    <text evidence="1">This is one of the proteins that binds to the 5S RNA in the ribosome where it forms part of the central protuberance.</text>
</comment>
<comment type="subunit">
    <text evidence="1">Part of the 50S ribosomal subunit; part of the 5S rRNA/L5/L18/L25 subcomplex. Contacts the 5S rRNA. Binds to the 5S rRNA independently of L5 and L18.</text>
</comment>
<comment type="similarity">
    <text evidence="1">Belongs to the bacterial ribosomal protein bL25 family. CTC subfamily.</text>
</comment>
<evidence type="ECO:0000255" key="1">
    <source>
        <dbReference type="HAMAP-Rule" id="MF_01334"/>
    </source>
</evidence>
<evidence type="ECO:0000305" key="2"/>
<proteinExistence type="inferred from homology"/>
<name>RL25_POLNA</name>
<protein>
    <recommendedName>
        <fullName evidence="1">Large ribosomal subunit protein bL25</fullName>
    </recommendedName>
    <alternativeName>
        <fullName evidence="2">50S ribosomal protein L25</fullName>
    </alternativeName>
    <alternativeName>
        <fullName evidence="1">General stress protein CTC</fullName>
    </alternativeName>
</protein>
<accession>A1VKN7</accession>
<dbReference type="EMBL" id="CP000529">
    <property type="protein sequence ID" value="ABM36215.1"/>
    <property type="molecule type" value="Genomic_DNA"/>
</dbReference>
<dbReference type="RefSeq" id="WP_011800309.1">
    <property type="nucleotide sequence ID" value="NC_008781.1"/>
</dbReference>
<dbReference type="SMR" id="A1VKN7"/>
<dbReference type="STRING" id="365044.Pnap_0898"/>
<dbReference type="KEGG" id="pna:Pnap_0898"/>
<dbReference type="eggNOG" id="COG1825">
    <property type="taxonomic scope" value="Bacteria"/>
</dbReference>
<dbReference type="HOGENOM" id="CLU_075939_0_1_4"/>
<dbReference type="OrthoDB" id="9806411at2"/>
<dbReference type="Proteomes" id="UP000000644">
    <property type="component" value="Chromosome"/>
</dbReference>
<dbReference type="GO" id="GO:0022625">
    <property type="term" value="C:cytosolic large ribosomal subunit"/>
    <property type="evidence" value="ECO:0007669"/>
    <property type="project" value="TreeGrafter"/>
</dbReference>
<dbReference type="GO" id="GO:0008097">
    <property type="term" value="F:5S rRNA binding"/>
    <property type="evidence" value="ECO:0007669"/>
    <property type="project" value="InterPro"/>
</dbReference>
<dbReference type="GO" id="GO:0003735">
    <property type="term" value="F:structural constituent of ribosome"/>
    <property type="evidence" value="ECO:0007669"/>
    <property type="project" value="InterPro"/>
</dbReference>
<dbReference type="GO" id="GO:0006412">
    <property type="term" value="P:translation"/>
    <property type="evidence" value="ECO:0007669"/>
    <property type="project" value="UniProtKB-UniRule"/>
</dbReference>
<dbReference type="CDD" id="cd00495">
    <property type="entry name" value="Ribosomal_L25_TL5_CTC"/>
    <property type="match status" value="1"/>
</dbReference>
<dbReference type="Gene3D" id="2.170.120.20">
    <property type="entry name" value="Ribosomal protein L25, beta domain"/>
    <property type="match status" value="1"/>
</dbReference>
<dbReference type="Gene3D" id="2.40.240.10">
    <property type="entry name" value="Ribosomal Protein L25, Chain P"/>
    <property type="match status" value="1"/>
</dbReference>
<dbReference type="HAMAP" id="MF_01336">
    <property type="entry name" value="Ribosomal_bL25"/>
    <property type="match status" value="1"/>
</dbReference>
<dbReference type="HAMAP" id="MF_01334">
    <property type="entry name" value="Ribosomal_bL25_CTC"/>
    <property type="match status" value="1"/>
</dbReference>
<dbReference type="InterPro" id="IPR020056">
    <property type="entry name" value="Rbsml_bL25/Gln-tRNA_synth_N"/>
</dbReference>
<dbReference type="InterPro" id="IPR011035">
    <property type="entry name" value="Ribosomal_bL25/Gln-tRNA_synth"/>
</dbReference>
<dbReference type="InterPro" id="IPR020057">
    <property type="entry name" value="Ribosomal_bL25_b-dom"/>
</dbReference>
<dbReference type="InterPro" id="IPR037121">
    <property type="entry name" value="Ribosomal_bL25_C"/>
</dbReference>
<dbReference type="InterPro" id="IPR001021">
    <property type="entry name" value="Ribosomal_bL25_long"/>
</dbReference>
<dbReference type="InterPro" id="IPR020055">
    <property type="entry name" value="Ribosomal_bL25_short"/>
</dbReference>
<dbReference type="InterPro" id="IPR029751">
    <property type="entry name" value="Ribosomal_L25_dom"/>
</dbReference>
<dbReference type="InterPro" id="IPR020930">
    <property type="entry name" value="Ribosomal_uL5_bac-type"/>
</dbReference>
<dbReference type="NCBIfam" id="TIGR00731">
    <property type="entry name" value="bL25_bact_ctc"/>
    <property type="match status" value="1"/>
</dbReference>
<dbReference type="NCBIfam" id="NF004130">
    <property type="entry name" value="PRK05618.1-5"/>
    <property type="match status" value="1"/>
</dbReference>
<dbReference type="NCBIfam" id="NF004612">
    <property type="entry name" value="PRK05943.1"/>
    <property type="match status" value="1"/>
</dbReference>
<dbReference type="PANTHER" id="PTHR33284">
    <property type="entry name" value="RIBOSOMAL PROTEIN L25/GLN-TRNA SYNTHETASE, ANTI-CODON-BINDING DOMAIN-CONTAINING PROTEIN"/>
    <property type="match status" value="1"/>
</dbReference>
<dbReference type="PANTHER" id="PTHR33284:SF1">
    <property type="entry name" value="RIBOSOMAL PROTEIN L25_GLN-TRNA SYNTHETASE, ANTI-CODON-BINDING DOMAIN-CONTAINING PROTEIN"/>
    <property type="match status" value="1"/>
</dbReference>
<dbReference type="Pfam" id="PF01386">
    <property type="entry name" value="Ribosomal_L25p"/>
    <property type="match status" value="1"/>
</dbReference>
<dbReference type="Pfam" id="PF14693">
    <property type="entry name" value="Ribosomal_TL5_C"/>
    <property type="match status" value="1"/>
</dbReference>
<dbReference type="SUPFAM" id="SSF50715">
    <property type="entry name" value="Ribosomal protein L25-like"/>
    <property type="match status" value="1"/>
</dbReference>
<organism>
    <name type="scientific">Polaromonas naphthalenivorans (strain CJ2)</name>
    <dbReference type="NCBI Taxonomy" id="365044"/>
    <lineage>
        <taxon>Bacteria</taxon>
        <taxon>Pseudomonadati</taxon>
        <taxon>Pseudomonadota</taxon>
        <taxon>Betaproteobacteria</taxon>
        <taxon>Burkholderiales</taxon>
        <taxon>Comamonadaceae</taxon>
        <taxon>Polaromonas</taxon>
    </lineage>
</organism>
<keyword id="KW-1185">Reference proteome</keyword>
<keyword id="KW-0687">Ribonucleoprotein</keyword>
<keyword id="KW-0689">Ribosomal protein</keyword>
<keyword id="KW-0694">RNA-binding</keyword>
<keyword id="KW-0699">rRNA-binding</keyword>
<reference key="1">
    <citation type="journal article" date="2009" name="Environ. Microbiol.">
        <title>The genome of Polaromonas naphthalenivorans strain CJ2, isolated from coal tar-contaminated sediment, reveals physiological and metabolic versatility and evolution through extensive horizontal gene transfer.</title>
        <authorList>
            <person name="Yagi J.M."/>
            <person name="Sims D."/>
            <person name="Brettin T."/>
            <person name="Bruce D."/>
            <person name="Madsen E.L."/>
        </authorList>
    </citation>
    <scope>NUCLEOTIDE SEQUENCE [LARGE SCALE GENOMIC DNA]</scope>
    <source>
        <strain>CJ2</strain>
    </source>
</reference>
<gene>
    <name evidence="1" type="primary">rplY</name>
    <name evidence="1" type="synonym">ctc</name>
    <name type="ordered locus">Pnap_0898</name>
</gene>
<sequence length="218" mass="23746">MKFVAFERAKQGTGASRRLRITGRTPGIVYGGTAEPILIEIDHNALWHAIKKEAFHGSILEMELGGTEHKVLLRDLQMHPYKQQVQHIDFQRVEARTRMTVKVPVHFSGEEESPAVKTENCLVTHVLTEMTVSCFPADIPDFIAVDLGGLTKGKSLHVKDIVLPKRVKAAVKGQVNPVMVSVTPIVEEVVEVAPVVVDPKAAKGKAGAKPAAKPAAKK</sequence>
<feature type="chain" id="PRO_1000052915" description="Large ribosomal subunit protein bL25">
    <location>
        <begin position="1"/>
        <end position="218"/>
    </location>
</feature>